<reference key="1">
    <citation type="journal article" date="2007" name="BMC Genomics">
        <title>Rapid evolutionary change of common bean (Phaseolus vulgaris L) plastome, and the genomic diversification of legume chloroplasts.</title>
        <authorList>
            <person name="Guo X."/>
            <person name="Castillo-Ramirez S."/>
            <person name="Gonzalez V."/>
            <person name="Bustos P."/>
            <person name="Fernandez-Vazquez J.L."/>
            <person name="Santamaria R.I."/>
            <person name="Arellano J."/>
            <person name="Cevallos M.A."/>
            <person name="Davila G."/>
        </authorList>
    </citation>
    <scope>NUCLEOTIDE SEQUENCE [LARGE SCALE GENOMIC DNA]</scope>
    <source>
        <strain>cv. Negro Jamapa</strain>
    </source>
</reference>
<reference key="2">
    <citation type="submission" date="2007-10" db="EMBL/GenBank/DDBJ databases">
        <title>Complete nucleotide sequence of the plastid genome of the common bean, Phaseolus vulgaris.</title>
        <authorList>
            <person name="Moore M.J."/>
            <person name="Triplett E.W."/>
            <person name="Broughton W.J."/>
            <person name="Soltis P.S."/>
            <person name="Soltis D.E."/>
        </authorList>
    </citation>
    <scope>NUCLEOTIDE SEQUENCE [LARGE SCALE GENOMIC DNA]</scope>
</reference>
<proteinExistence type="inferred from homology"/>
<name>PSBB_PHAVU</name>
<comment type="function">
    <text evidence="1">One of the components of the core complex of photosystem II (PSII). It binds chlorophyll and helps catalyze the primary light-induced photochemical processes of PSII. PSII is a light-driven water:plastoquinone oxidoreductase, using light energy to abstract electrons from H(2)O, generating O(2) and a proton gradient subsequently used for ATP formation.</text>
</comment>
<comment type="cofactor">
    <text evidence="1">Binds multiple chlorophylls. PSII binds additional chlorophylls, carotenoids and specific lipids.</text>
</comment>
<comment type="subunit">
    <text evidence="1">PSII is composed of 1 copy each of membrane proteins PsbA, PsbB, PsbC, PsbD, PsbE, PsbF, PsbH, PsbI, PsbJ, PsbK, PsbL, PsbM, PsbT, PsbX, PsbY, PsbZ, Psb30/Ycf12, at least 3 peripheral proteins of the oxygen-evolving complex and a large number of cofactors. It forms dimeric complexes.</text>
</comment>
<comment type="subcellular location">
    <subcellularLocation>
        <location evidence="1">Plastid</location>
        <location evidence="1">Chloroplast thylakoid membrane</location>
        <topology evidence="1">Multi-pass membrane protein</topology>
    </subcellularLocation>
</comment>
<comment type="similarity">
    <text evidence="1">Belongs to the PsbB/PsbC family. PsbB subfamily.</text>
</comment>
<protein>
    <recommendedName>
        <fullName evidence="1">Photosystem II CP47 reaction center protein</fullName>
    </recommendedName>
    <alternativeName>
        <fullName evidence="1">PSII 47 kDa protein</fullName>
    </alternativeName>
    <alternativeName>
        <fullName evidence="1">Protein CP-47</fullName>
    </alternativeName>
</protein>
<dbReference type="EMBL" id="DQ886273">
    <property type="protein sequence ID" value="ABH88111.1"/>
    <property type="molecule type" value="Genomic_DNA"/>
</dbReference>
<dbReference type="EMBL" id="EU196765">
    <property type="protein sequence ID" value="ABW22758.1"/>
    <property type="molecule type" value="Genomic_DNA"/>
</dbReference>
<dbReference type="RefSeq" id="YP_001122832.1">
    <property type="nucleotide sequence ID" value="NC_009259.1"/>
</dbReference>
<dbReference type="SMR" id="A4GGD1"/>
<dbReference type="GeneID" id="4961764"/>
<dbReference type="KEGG" id="pvu:4961764"/>
<dbReference type="eggNOG" id="ENOG502QRV6">
    <property type="taxonomic scope" value="Eukaryota"/>
</dbReference>
<dbReference type="GO" id="GO:0009535">
    <property type="term" value="C:chloroplast thylakoid membrane"/>
    <property type="evidence" value="ECO:0007669"/>
    <property type="project" value="UniProtKB-SubCell"/>
</dbReference>
<dbReference type="GO" id="GO:0009523">
    <property type="term" value="C:photosystem II"/>
    <property type="evidence" value="ECO:0007669"/>
    <property type="project" value="UniProtKB-KW"/>
</dbReference>
<dbReference type="GO" id="GO:0016168">
    <property type="term" value="F:chlorophyll binding"/>
    <property type="evidence" value="ECO:0007669"/>
    <property type="project" value="UniProtKB-UniRule"/>
</dbReference>
<dbReference type="GO" id="GO:0045156">
    <property type="term" value="F:electron transporter, transferring electrons within the cyclic electron transport pathway of photosynthesis activity"/>
    <property type="evidence" value="ECO:0007669"/>
    <property type="project" value="InterPro"/>
</dbReference>
<dbReference type="GO" id="GO:0009772">
    <property type="term" value="P:photosynthetic electron transport in photosystem II"/>
    <property type="evidence" value="ECO:0007669"/>
    <property type="project" value="InterPro"/>
</dbReference>
<dbReference type="FunFam" id="3.10.680.10:FF:000001">
    <property type="entry name" value="Photosystem II CP47 reaction center protein"/>
    <property type="match status" value="1"/>
</dbReference>
<dbReference type="Gene3D" id="3.10.680.10">
    <property type="entry name" value="Photosystem II CP47 reaction center protein"/>
    <property type="match status" value="1"/>
</dbReference>
<dbReference type="HAMAP" id="MF_01495">
    <property type="entry name" value="PSII_PsbB_CP47"/>
    <property type="match status" value="1"/>
</dbReference>
<dbReference type="InterPro" id="IPR000932">
    <property type="entry name" value="PS_antenna-like"/>
</dbReference>
<dbReference type="InterPro" id="IPR036001">
    <property type="entry name" value="PS_II_antenna-like_sf"/>
</dbReference>
<dbReference type="InterPro" id="IPR017486">
    <property type="entry name" value="PSII_PsbB"/>
</dbReference>
<dbReference type="NCBIfam" id="TIGR03039">
    <property type="entry name" value="PS_II_CP47"/>
    <property type="match status" value="1"/>
</dbReference>
<dbReference type="PANTHER" id="PTHR33180">
    <property type="entry name" value="PHOTOSYSTEM II CP43 REACTION CENTER PROTEIN"/>
    <property type="match status" value="1"/>
</dbReference>
<dbReference type="PANTHER" id="PTHR33180:SF38">
    <property type="entry name" value="PHOTOSYSTEM II CP47 REACTION CENTER PROTEIN"/>
    <property type="match status" value="1"/>
</dbReference>
<dbReference type="Pfam" id="PF00421">
    <property type="entry name" value="PSII"/>
    <property type="match status" value="1"/>
</dbReference>
<dbReference type="SUPFAM" id="SSF161077">
    <property type="entry name" value="Photosystem II antenna protein-like"/>
    <property type="match status" value="1"/>
</dbReference>
<accession>A4GGD1</accession>
<organism>
    <name type="scientific">Phaseolus vulgaris</name>
    <name type="common">Kidney bean</name>
    <name type="synonym">French bean</name>
    <dbReference type="NCBI Taxonomy" id="3885"/>
    <lineage>
        <taxon>Eukaryota</taxon>
        <taxon>Viridiplantae</taxon>
        <taxon>Streptophyta</taxon>
        <taxon>Embryophyta</taxon>
        <taxon>Tracheophyta</taxon>
        <taxon>Spermatophyta</taxon>
        <taxon>Magnoliopsida</taxon>
        <taxon>eudicotyledons</taxon>
        <taxon>Gunneridae</taxon>
        <taxon>Pentapetalae</taxon>
        <taxon>rosids</taxon>
        <taxon>fabids</taxon>
        <taxon>Fabales</taxon>
        <taxon>Fabaceae</taxon>
        <taxon>Papilionoideae</taxon>
        <taxon>50 kb inversion clade</taxon>
        <taxon>NPAAA clade</taxon>
        <taxon>indigoferoid/millettioid clade</taxon>
        <taxon>Phaseoleae</taxon>
        <taxon>Phaseolus</taxon>
    </lineage>
</organism>
<sequence length="508" mass="56148">MGLPWYRVHTVVLNDPGRLLSVHIMHTALVAGWAGSMALYELAVFDPSDPVLDPMWRQGMFVIPFMTRLGITNSWGGWNITGGAITNPGIWSYEGVAGAHIVFSGLCFLAAIWHWVYWDLEIFCDERTGKPSLDLPKIFGIHLFLAGVACFGFGAFHVTGLYGPGIWVSDPYGLTGRIQSVNPAWGVEGFDPFVPGGVASHHIAAGTLGILAGLFHLSVRPPQRLYKGLRMGNIETVLSSSIAAVFFAAFVVAGTMWYGSATTPIELFGPTRYQWDQGYFQQEIYRRVGAGLAENQNLTEAWSKIPEKLAFYDYIGNNPAKGGLFRAGSMDNGDGIAVGWLGHPIFRDKEGHELFVRRMPTFFETFPVVLVDGDGIVRADVPFRRAESKYSVEQVGVTVEFYGGELNGISYSDPTTVKKYARRAQLGEIFELDRATLKSDGVFRSSPRGWFTFGHASFALLFFFGHIWHGARTLFRDVFAGIDPDLDAQVEFGAFQKLGDPTTRRQVV</sequence>
<keyword id="KW-0148">Chlorophyll</keyword>
<keyword id="KW-0150">Chloroplast</keyword>
<keyword id="KW-0157">Chromophore</keyword>
<keyword id="KW-0472">Membrane</keyword>
<keyword id="KW-0602">Photosynthesis</keyword>
<keyword id="KW-0604">Photosystem II</keyword>
<keyword id="KW-0934">Plastid</keyword>
<keyword id="KW-0793">Thylakoid</keyword>
<keyword id="KW-0812">Transmembrane</keyword>
<keyword id="KW-1133">Transmembrane helix</keyword>
<evidence type="ECO:0000255" key="1">
    <source>
        <dbReference type="HAMAP-Rule" id="MF_01495"/>
    </source>
</evidence>
<feature type="chain" id="PRO_0000359854" description="Photosystem II CP47 reaction center protein">
    <location>
        <begin position="1"/>
        <end position="508"/>
    </location>
</feature>
<feature type="transmembrane region" description="Helical" evidence="1">
    <location>
        <begin position="21"/>
        <end position="36"/>
    </location>
</feature>
<feature type="transmembrane region" description="Helical" evidence="1">
    <location>
        <begin position="101"/>
        <end position="115"/>
    </location>
</feature>
<feature type="transmembrane region" description="Helical" evidence="1">
    <location>
        <begin position="140"/>
        <end position="156"/>
    </location>
</feature>
<feature type="transmembrane region" description="Helical" evidence="1">
    <location>
        <begin position="203"/>
        <end position="218"/>
    </location>
</feature>
<feature type="transmembrane region" description="Helical" evidence="1">
    <location>
        <begin position="237"/>
        <end position="252"/>
    </location>
</feature>
<feature type="transmembrane region" description="Helical" evidence="1">
    <location>
        <begin position="457"/>
        <end position="472"/>
    </location>
</feature>
<geneLocation type="chloroplast"/>
<gene>
    <name evidence="1" type="primary">psbB</name>
</gene>